<comment type="similarity">
    <text evidence="1">Belongs to the UPF0225 family.</text>
</comment>
<reference key="1">
    <citation type="journal article" date="2008" name="PLoS ONE">
        <title>A recalibrated molecular clock and independent origins for the cholera pandemic clones.</title>
        <authorList>
            <person name="Feng L."/>
            <person name="Reeves P.R."/>
            <person name="Lan R."/>
            <person name="Ren Y."/>
            <person name="Gao C."/>
            <person name="Zhou Z."/>
            <person name="Ren Y."/>
            <person name="Cheng J."/>
            <person name="Wang W."/>
            <person name="Wang J."/>
            <person name="Qian W."/>
            <person name="Li D."/>
            <person name="Wang L."/>
        </authorList>
    </citation>
    <scope>NUCLEOTIDE SEQUENCE [LARGE SCALE GENOMIC DNA]</scope>
    <source>
        <strain>M66-2</strain>
    </source>
</reference>
<evidence type="ECO:0000255" key="1">
    <source>
        <dbReference type="HAMAP-Rule" id="MF_00612"/>
    </source>
</evidence>
<proteinExistence type="inferred from homology"/>
<dbReference type="EMBL" id="CP001233">
    <property type="protein sequence ID" value="ACP06081.1"/>
    <property type="molecule type" value="Genomic_DNA"/>
</dbReference>
<dbReference type="RefSeq" id="WP_001881606.1">
    <property type="nucleotide sequence ID" value="NC_012578.1"/>
</dbReference>
<dbReference type="SMR" id="C3LNF5"/>
<dbReference type="KEGG" id="vcm:VCM66_1775"/>
<dbReference type="HOGENOM" id="CLU_099590_0_0_6"/>
<dbReference type="Proteomes" id="UP000001217">
    <property type="component" value="Chromosome I"/>
</dbReference>
<dbReference type="Gene3D" id="3.10.450.50">
    <property type="match status" value="1"/>
</dbReference>
<dbReference type="HAMAP" id="MF_00612">
    <property type="entry name" value="UPF0225"/>
    <property type="match status" value="1"/>
</dbReference>
<dbReference type="InterPro" id="IPR032710">
    <property type="entry name" value="NTF2-like_dom_sf"/>
</dbReference>
<dbReference type="InterPro" id="IPR004027">
    <property type="entry name" value="SEC_C_motif"/>
</dbReference>
<dbReference type="InterPro" id="IPR023006">
    <property type="entry name" value="UPF0225"/>
</dbReference>
<dbReference type="InterPro" id="IPR048469">
    <property type="entry name" value="YchJ-like_M"/>
</dbReference>
<dbReference type="NCBIfam" id="NF002449">
    <property type="entry name" value="PRK01617.1"/>
    <property type="match status" value="1"/>
</dbReference>
<dbReference type="NCBIfam" id="NF002592">
    <property type="entry name" value="PRK02250.1"/>
    <property type="match status" value="1"/>
</dbReference>
<dbReference type="PANTHER" id="PTHR33747:SF1">
    <property type="entry name" value="ADENYLATE CYCLASE-ASSOCIATED CAP C-TERMINAL DOMAIN-CONTAINING PROTEIN"/>
    <property type="match status" value="1"/>
</dbReference>
<dbReference type="PANTHER" id="PTHR33747">
    <property type="entry name" value="UPF0225 PROTEIN SCO1677"/>
    <property type="match status" value="1"/>
</dbReference>
<dbReference type="Pfam" id="PF02810">
    <property type="entry name" value="SEC-C"/>
    <property type="match status" value="1"/>
</dbReference>
<dbReference type="Pfam" id="PF17775">
    <property type="entry name" value="YchJ_M-like"/>
    <property type="match status" value="1"/>
</dbReference>
<dbReference type="SUPFAM" id="SSF54427">
    <property type="entry name" value="NTF2-like"/>
    <property type="match status" value="1"/>
</dbReference>
<dbReference type="SUPFAM" id="SSF103642">
    <property type="entry name" value="Sec-C motif"/>
    <property type="match status" value="1"/>
</dbReference>
<gene>
    <name type="ordered locus">VCM66_1775</name>
</gene>
<protein>
    <recommendedName>
        <fullName evidence="1">UPF0225 protein VCM66_1775</fullName>
    </recommendedName>
</protein>
<organism>
    <name type="scientific">Vibrio cholerae serotype O1 (strain M66-2)</name>
    <dbReference type="NCBI Taxonomy" id="579112"/>
    <lineage>
        <taxon>Bacteria</taxon>
        <taxon>Pseudomonadati</taxon>
        <taxon>Pseudomonadota</taxon>
        <taxon>Gammaproteobacteria</taxon>
        <taxon>Vibrionales</taxon>
        <taxon>Vibrionaceae</taxon>
        <taxon>Vibrio</taxon>
    </lineage>
</organism>
<accession>C3LNF5</accession>
<feature type="chain" id="PRO_1000200402" description="UPF0225 protein VCM66_1775">
    <location>
        <begin position="1"/>
        <end position="151"/>
    </location>
</feature>
<name>Y1775_VIBCM</name>
<sequence>MSCYCGNTQPYSQCCEPIHLNPHSAQVPEQLMRARFSAHILKNVEFVIETYHPSCQASNERDAISESVHSHWLRLEIISTQMGATPNEGFVHFKAFLDQEGKVFCLEERSRFLKENNCWFYIDGEFPAAIKQGRNDPCACGSGKKYKKCCG</sequence>